<name>RL27_SHIF8</name>
<gene>
    <name evidence="1" type="primary">rpmA</name>
    <name type="ordered locus">SFV_3215</name>
</gene>
<dbReference type="EMBL" id="CP000266">
    <property type="protein sequence ID" value="ABF05266.1"/>
    <property type="molecule type" value="Genomic_DNA"/>
</dbReference>
<dbReference type="RefSeq" id="WP_000940595.1">
    <property type="nucleotide sequence ID" value="NC_008258.1"/>
</dbReference>
<dbReference type="SMR" id="Q0T099"/>
<dbReference type="GeneID" id="93778796"/>
<dbReference type="KEGG" id="sfv:SFV_3215"/>
<dbReference type="HOGENOM" id="CLU_095424_4_1_6"/>
<dbReference type="Proteomes" id="UP000000659">
    <property type="component" value="Chromosome"/>
</dbReference>
<dbReference type="GO" id="GO:0022625">
    <property type="term" value="C:cytosolic large ribosomal subunit"/>
    <property type="evidence" value="ECO:0007669"/>
    <property type="project" value="TreeGrafter"/>
</dbReference>
<dbReference type="GO" id="GO:0003735">
    <property type="term" value="F:structural constituent of ribosome"/>
    <property type="evidence" value="ECO:0007669"/>
    <property type="project" value="InterPro"/>
</dbReference>
<dbReference type="GO" id="GO:0006412">
    <property type="term" value="P:translation"/>
    <property type="evidence" value="ECO:0007669"/>
    <property type="project" value="UniProtKB-UniRule"/>
</dbReference>
<dbReference type="FunFam" id="2.40.50.100:FF:000001">
    <property type="entry name" value="50S ribosomal protein L27"/>
    <property type="match status" value="1"/>
</dbReference>
<dbReference type="Gene3D" id="2.40.50.100">
    <property type="match status" value="1"/>
</dbReference>
<dbReference type="HAMAP" id="MF_00539">
    <property type="entry name" value="Ribosomal_bL27"/>
    <property type="match status" value="1"/>
</dbReference>
<dbReference type="InterPro" id="IPR001684">
    <property type="entry name" value="Ribosomal_bL27"/>
</dbReference>
<dbReference type="InterPro" id="IPR018261">
    <property type="entry name" value="Ribosomal_bL27_CS"/>
</dbReference>
<dbReference type="NCBIfam" id="TIGR00062">
    <property type="entry name" value="L27"/>
    <property type="match status" value="1"/>
</dbReference>
<dbReference type="PANTHER" id="PTHR15893:SF0">
    <property type="entry name" value="LARGE RIBOSOMAL SUBUNIT PROTEIN BL27M"/>
    <property type="match status" value="1"/>
</dbReference>
<dbReference type="PANTHER" id="PTHR15893">
    <property type="entry name" value="RIBOSOMAL PROTEIN L27"/>
    <property type="match status" value="1"/>
</dbReference>
<dbReference type="Pfam" id="PF01016">
    <property type="entry name" value="Ribosomal_L27"/>
    <property type="match status" value="1"/>
</dbReference>
<dbReference type="PRINTS" id="PR00063">
    <property type="entry name" value="RIBOSOMALL27"/>
</dbReference>
<dbReference type="SUPFAM" id="SSF110324">
    <property type="entry name" value="Ribosomal L27 protein-like"/>
    <property type="match status" value="1"/>
</dbReference>
<dbReference type="PROSITE" id="PS00831">
    <property type="entry name" value="RIBOSOMAL_L27"/>
    <property type="match status" value="1"/>
</dbReference>
<proteinExistence type="inferred from homology"/>
<evidence type="ECO:0000255" key="1">
    <source>
        <dbReference type="HAMAP-Rule" id="MF_00539"/>
    </source>
</evidence>
<evidence type="ECO:0000256" key="2">
    <source>
        <dbReference type="SAM" id="MobiDB-lite"/>
    </source>
</evidence>
<evidence type="ECO:0000305" key="3"/>
<sequence>MAHKKAGGSTRNGRDSEAKRLGVKRFGGESVLAGSIIVRQRGTKFHAGANVGCGRDHTLFAKADGKVKFEVKGPKNRKFISIEAE</sequence>
<keyword id="KW-0687">Ribonucleoprotein</keyword>
<keyword id="KW-0689">Ribosomal protein</keyword>
<comment type="similarity">
    <text evidence="1">Belongs to the bacterial ribosomal protein bL27 family.</text>
</comment>
<protein>
    <recommendedName>
        <fullName evidence="1">Large ribosomal subunit protein bL27</fullName>
    </recommendedName>
    <alternativeName>
        <fullName evidence="3">50S ribosomal protein L27</fullName>
    </alternativeName>
</protein>
<accession>Q0T099</accession>
<organism>
    <name type="scientific">Shigella flexneri serotype 5b (strain 8401)</name>
    <dbReference type="NCBI Taxonomy" id="373384"/>
    <lineage>
        <taxon>Bacteria</taxon>
        <taxon>Pseudomonadati</taxon>
        <taxon>Pseudomonadota</taxon>
        <taxon>Gammaproteobacteria</taxon>
        <taxon>Enterobacterales</taxon>
        <taxon>Enterobacteriaceae</taxon>
        <taxon>Shigella</taxon>
    </lineage>
</organism>
<reference key="1">
    <citation type="journal article" date="2006" name="BMC Genomics">
        <title>Complete genome sequence of Shigella flexneri 5b and comparison with Shigella flexneri 2a.</title>
        <authorList>
            <person name="Nie H."/>
            <person name="Yang F."/>
            <person name="Zhang X."/>
            <person name="Yang J."/>
            <person name="Chen L."/>
            <person name="Wang J."/>
            <person name="Xiong Z."/>
            <person name="Peng J."/>
            <person name="Sun L."/>
            <person name="Dong J."/>
            <person name="Xue Y."/>
            <person name="Xu X."/>
            <person name="Chen S."/>
            <person name="Yao Z."/>
            <person name="Shen Y."/>
            <person name="Jin Q."/>
        </authorList>
    </citation>
    <scope>NUCLEOTIDE SEQUENCE [LARGE SCALE GENOMIC DNA]</scope>
    <source>
        <strain>8401</strain>
    </source>
</reference>
<feature type="chain" id="PRO_1000017609" description="Large ribosomal subunit protein bL27">
    <location>
        <begin position="1"/>
        <end position="85"/>
    </location>
</feature>
<feature type="region of interest" description="Disordered" evidence="2">
    <location>
        <begin position="1"/>
        <end position="20"/>
    </location>
</feature>